<comment type="function">
    <text evidence="1">Catalyzes the transfer of endogenously produced octanoic acid from octanoyl-acyl-carrier-protein onto the lipoyl domains of lipoate-dependent enzymes. Lipoyl-ACP can also act as a substrate although octanoyl-ACP is likely to be the physiological substrate.</text>
</comment>
<comment type="catalytic activity">
    <reaction evidence="1">
        <text>octanoyl-[ACP] + L-lysyl-[protein] = N(6)-octanoyl-L-lysyl-[protein] + holo-[ACP] + H(+)</text>
        <dbReference type="Rhea" id="RHEA:17665"/>
        <dbReference type="Rhea" id="RHEA-COMP:9636"/>
        <dbReference type="Rhea" id="RHEA-COMP:9685"/>
        <dbReference type="Rhea" id="RHEA-COMP:9752"/>
        <dbReference type="Rhea" id="RHEA-COMP:9928"/>
        <dbReference type="ChEBI" id="CHEBI:15378"/>
        <dbReference type="ChEBI" id="CHEBI:29969"/>
        <dbReference type="ChEBI" id="CHEBI:64479"/>
        <dbReference type="ChEBI" id="CHEBI:78463"/>
        <dbReference type="ChEBI" id="CHEBI:78809"/>
        <dbReference type="EC" id="2.3.1.181"/>
    </reaction>
</comment>
<comment type="pathway">
    <text evidence="1">Protein modification; protein lipoylation via endogenous pathway; protein N(6)-(lipoyl)lysine from octanoyl-[acyl-carrier-protein]: step 1/2.</text>
</comment>
<comment type="subcellular location">
    <subcellularLocation>
        <location evidence="1">Cytoplasm</location>
    </subcellularLocation>
</comment>
<comment type="miscellaneous">
    <text evidence="1">In the reaction, the free carboxyl group of octanoic acid is attached via an amide linkage to the epsilon-amino group of a specific lysine residue of lipoyl domains of lipoate-dependent enzymes.</text>
</comment>
<comment type="similarity">
    <text evidence="1">Belongs to the LipB family.</text>
</comment>
<feature type="chain" id="PRO_0000062865" description="Octanoyltransferase">
    <location>
        <begin position="1"/>
        <end position="214"/>
    </location>
</feature>
<feature type="domain" description="BPL/LPL catalytic" evidence="2">
    <location>
        <begin position="35"/>
        <end position="211"/>
    </location>
</feature>
<feature type="active site" description="Acyl-thioester intermediate" evidence="1">
    <location>
        <position position="173"/>
    </location>
</feature>
<feature type="binding site" evidence="1">
    <location>
        <begin position="75"/>
        <end position="82"/>
    </location>
    <ligand>
        <name>substrate</name>
    </ligand>
</feature>
<feature type="binding site" evidence="1">
    <location>
        <begin position="142"/>
        <end position="144"/>
    </location>
    <ligand>
        <name>substrate</name>
    </ligand>
</feature>
<feature type="binding site" evidence="1">
    <location>
        <begin position="155"/>
        <end position="157"/>
    </location>
    <ligand>
        <name>substrate</name>
    </ligand>
</feature>
<feature type="site" description="Lowers pKa of active site Cys" evidence="1">
    <location>
        <position position="139"/>
    </location>
</feature>
<accession>Q7V2R8</accession>
<gene>
    <name evidence="1" type="primary">lipB</name>
    <name type="ordered locus">PMM0401</name>
</gene>
<sequence length="214" mass="24726">MINRTSIIKQPDKISFFYDVYKLQKEYQDSLISGKSNMNFIWLGEHQLCYTVGRGSNMDNLLFSADEQDVFKIDRGGEVTCHMPGQLVTYLVLDLSNLNKDLNWYLRKIEKIIIKTLRSFNINCSTKDGFTGVWIGERKIASIGIGCKRWVTIHGFSINVNCKLENFNKIVPCGIKGCQMVNMSDYNKNVDIKEVKKIVKKIIHEEFNFNFVSE</sequence>
<name>LIPB_PROMP</name>
<keyword id="KW-0012">Acyltransferase</keyword>
<keyword id="KW-0963">Cytoplasm</keyword>
<keyword id="KW-0808">Transferase</keyword>
<organism>
    <name type="scientific">Prochlorococcus marinus subsp. pastoris (strain CCMP1986 / NIES-2087 / MED4)</name>
    <dbReference type="NCBI Taxonomy" id="59919"/>
    <lineage>
        <taxon>Bacteria</taxon>
        <taxon>Bacillati</taxon>
        <taxon>Cyanobacteriota</taxon>
        <taxon>Cyanophyceae</taxon>
        <taxon>Synechococcales</taxon>
        <taxon>Prochlorococcaceae</taxon>
        <taxon>Prochlorococcus</taxon>
    </lineage>
</organism>
<protein>
    <recommendedName>
        <fullName evidence="1">Octanoyltransferase</fullName>
        <ecNumber evidence="1">2.3.1.181</ecNumber>
    </recommendedName>
    <alternativeName>
        <fullName evidence="1">Lipoate-protein ligase B</fullName>
    </alternativeName>
    <alternativeName>
        <fullName evidence="1">Lipoyl/octanoyl transferase</fullName>
    </alternativeName>
    <alternativeName>
        <fullName evidence="1">Octanoyl-[acyl-carrier-protein]-protein N-octanoyltransferase</fullName>
    </alternativeName>
</protein>
<dbReference type="EC" id="2.3.1.181" evidence="1"/>
<dbReference type="EMBL" id="BX548174">
    <property type="protein sequence ID" value="CAE18860.1"/>
    <property type="molecule type" value="Genomic_DNA"/>
</dbReference>
<dbReference type="RefSeq" id="WP_011132037.1">
    <property type="nucleotide sequence ID" value="NC_005072.1"/>
</dbReference>
<dbReference type="SMR" id="Q7V2R8"/>
<dbReference type="STRING" id="59919.PMM0401"/>
<dbReference type="KEGG" id="pmm:PMM0401"/>
<dbReference type="eggNOG" id="COG0321">
    <property type="taxonomic scope" value="Bacteria"/>
</dbReference>
<dbReference type="HOGENOM" id="CLU_035168_1_3_3"/>
<dbReference type="OrthoDB" id="9787061at2"/>
<dbReference type="UniPathway" id="UPA00538">
    <property type="reaction ID" value="UER00592"/>
</dbReference>
<dbReference type="Proteomes" id="UP000001026">
    <property type="component" value="Chromosome"/>
</dbReference>
<dbReference type="GO" id="GO:0005737">
    <property type="term" value="C:cytoplasm"/>
    <property type="evidence" value="ECO:0007669"/>
    <property type="project" value="UniProtKB-SubCell"/>
</dbReference>
<dbReference type="GO" id="GO:0033819">
    <property type="term" value="F:lipoyl(octanoyl) transferase activity"/>
    <property type="evidence" value="ECO:0007669"/>
    <property type="project" value="UniProtKB-EC"/>
</dbReference>
<dbReference type="GO" id="GO:0036211">
    <property type="term" value="P:protein modification process"/>
    <property type="evidence" value="ECO:0007669"/>
    <property type="project" value="InterPro"/>
</dbReference>
<dbReference type="CDD" id="cd16444">
    <property type="entry name" value="LipB"/>
    <property type="match status" value="1"/>
</dbReference>
<dbReference type="Gene3D" id="3.30.930.10">
    <property type="entry name" value="Bira Bifunctional Protein, Domain 2"/>
    <property type="match status" value="1"/>
</dbReference>
<dbReference type="HAMAP" id="MF_00013">
    <property type="entry name" value="LipB"/>
    <property type="match status" value="1"/>
</dbReference>
<dbReference type="InterPro" id="IPR045864">
    <property type="entry name" value="aa-tRNA-synth_II/BPL/LPL"/>
</dbReference>
<dbReference type="InterPro" id="IPR004143">
    <property type="entry name" value="BPL_LPL_catalytic"/>
</dbReference>
<dbReference type="InterPro" id="IPR000544">
    <property type="entry name" value="Octanoyltransferase"/>
</dbReference>
<dbReference type="InterPro" id="IPR020605">
    <property type="entry name" value="Octanoyltransferase_CS"/>
</dbReference>
<dbReference type="NCBIfam" id="TIGR00214">
    <property type="entry name" value="lipB"/>
    <property type="match status" value="1"/>
</dbReference>
<dbReference type="PANTHER" id="PTHR10993:SF7">
    <property type="entry name" value="LIPOYLTRANSFERASE 2, MITOCHONDRIAL-RELATED"/>
    <property type="match status" value="1"/>
</dbReference>
<dbReference type="PANTHER" id="PTHR10993">
    <property type="entry name" value="OCTANOYLTRANSFERASE"/>
    <property type="match status" value="1"/>
</dbReference>
<dbReference type="Pfam" id="PF21948">
    <property type="entry name" value="LplA-B_cat"/>
    <property type="match status" value="1"/>
</dbReference>
<dbReference type="PIRSF" id="PIRSF016262">
    <property type="entry name" value="LPLase"/>
    <property type="match status" value="1"/>
</dbReference>
<dbReference type="SUPFAM" id="SSF55681">
    <property type="entry name" value="Class II aaRS and biotin synthetases"/>
    <property type="match status" value="1"/>
</dbReference>
<dbReference type="PROSITE" id="PS51733">
    <property type="entry name" value="BPL_LPL_CATALYTIC"/>
    <property type="match status" value="1"/>
</dbReference>
<dbReference type="PROSITE" id="PS01313">
    <property type="entry name" value="LIPB"/>
    <property type="match status" value="1"/>
</dbReference>
<reference key="1">
    <citation type="journal article" date="2003" name="Nature">
        <title>Genome divergence in two Prochlorococcus ecotypes reflects oceanic niche differentiation.</title>
        <authorList>
            <person name="Rocap G."/>
            <person name="Larimer F.W."/>
            <person name="Lamerdin J.E."/>
            <person name="Malfatti S."/>
            <person name="Chain P."/>
            <person name="Ahlgren N.A."/>
            <person name="Arellano A."/>
            <person name="Coleman M."/>
            <person name="Hauser L."/>
            <person name="Hess W.R."/>
            <person name="Johnson Z.I."/>
            <person name="Land M.L."/>
            <person name="Lindell D."/>
            <person name="Post A.F."/>
            <person name="Regala W."/>
            <person name="Shah M."/>
            <person name="Shaw S.L."/>
            <person name="Steglich C."/>
            <person name="Sullivan M.B."/>
            <person name="Ting C.S."/>
            <person name="Tolonen A."/>
            <person name="Webb E.A."/>
            <person name="Zinser E.R."/>
            <person name="Chisholm S.W."/>
        </authorList>
    </citation>
    <scope>NUCLEOTIDE SEQUENCE [LARGE SCALE GENOMIC DNA]</scope>
    <source>
        <strain>CCMP1986 / NIES-2087 / MED4</strain>
    </source>
</reference>
<evidence type="ECO:0000255" key="1">
    <source>
        <dbReference type="HAMAP-Rule" id="MF_00013"/>
    </source>
</evidence>
<evidence type="ECO:0000255" key="2">
    <source>
        <dbReference type="PROSITE-ProRule" id="PRU01067"/>
    </source>
</evidence>
<proteinExistence type="inferred from homology"/>